<organism>
    <name type="scientific">Haemophilus influenzae (strain PittGG)</name>
    <dbReference type="NCBI Taxonomy" id="374931"/>
    <lineage>
        <taxon>Bacteria</taxon>
        <taxon>Pseudomonadati</taxon>
        <taxon>Pseudomonadota</taxon>
        <taxon>Gammaproteobacteria</taxon>
        <taxon>Pasteurellales</taxon>
        <taxon>Pasteurellaceae</taxon>
        <taxon>Haemophilus</taxon>
    </lineage>
</organism>
<protein>
    <recommendedName>
        <fullName evidence="1">Elongation factor 4</fullName>
        <shortName evidence="1">EF-4</shortName>
        <ecNumber evidence="1">3.6.5.n1</ecNumber>
    </recommendedName>
    <alternativeName>
        <fullName evidence="1">Ribosomal back-translocase LepA</fullName>
    </alternativeName>
</protein>
<reference key="1">
    <citation type="journal article" date="2007" name="Genome Biol.">
        <title>Characterization and modeling of the Haemophilus influenzae core and supragenomes based on the complete genomic sequences of Rd and 12 clinical nontypeable strains.</title>
        <authorList>
            <person name="Hogg J.S."/>
            <person name="Hu F.Z."/>
            <person name="Janto B."/>
            <person name="Boissy R."/>
            <person name="Hayes J."/>
            <person name="Keefe R."/>
            <person name="Post J.C."/>
            <person name="Ehrlich G.D."/>
        </authorList>
    </citation>
    <scope>NUCLEOTIDE SEQUENCE [LARGE SCALE GENOMIC DNA]</scope>
    <source>
        <strain>PittGG</strain>
    </source>
</reference>
<name>LEPA_HAEIG</name>
<proteinExistence type="inferred from homology"/>
<keyword id="KW-0997">Cell inner membrane</keyword>
<keyword id="KW-1003">Cell membrane</keyword>
<keyword id="KW-0342">GTP-binding</keyword>
<keyword id="KW-0378">Hydrolase</keyword>
<keyword id="KW-0472">Membrane</keyword>
<keyword id="KW-0547">Nucleotide-binding</keyword>
<keyword id="KW-0648">Protein biosynthesis</keyword>
<dbReference type="EC" id="3.6.5.n1" evidence="1"/>
<dbReference type="EMBL" id="CP000672">
    <property type="protein sequence ID" value="ABQ99544.1"/>
    <property type="molecule type" value="Genomic_DNA"/>
</dbReference>
<dbReference type="SMR" id="A5UFI9"/>
<dbReference type="KEGG" id="hiq:CGSHiGG_02545"/>
<dbReference type="HOGENOM" id="CLU_009995_3_3_6"/>
<dbReference type="Proteomes" id="UP000001990">
    <property type="component" value="Chromosome"/>
</dbReference>
<dbReference type="GO" id="GO:0005886">
    <property type="term" value="C:plasma membrane"/>
    <property type="evidence" value="ECO:0007669"/>
    <property type="project" value="UniProtKB-SubCell"/>
</dbReference>
<dbReference type="GO" id="GO:0005525">
    <property type="term" value="F:GTP binding"/>
    <property type="evidence" value="ECO:0007669"/>
    <property type="project" value="UniProtKB-UniRule"/>
</dbReference>
<dbReference type="GO" id="GO:0003924">
    <property type="term" value="F:GTPase activity"/>
    <property type="evidence" value="ECO:0007669"/>
    <property type="project" value="UniProtKB-UniRule"/>
</dbReference>
<dbReference type="GO" id="GO:0097216">
    <property type="term" value="F:guanosine tetraphosphate binding"/>
    <property type="evidence" value="ECO:0007669"/>
    <property type="project" value="UniProtKB-ARBA"/>
</dbReference>
<dbReference type="GO" id="GO:0043022">
    <property type="term" value="F:ribosome binding"/>
    <property type="evidence" value="ECO:0007669"/>
    <property type="project" value="UniProtKB-UniRule"/>
</dbReference>
<dbReference type="GO" id="GO:0003746">
    <property type="term" value="F:translation elongation factor activity"/>
    <property type="evidence" value="ECO:0007669"/>
    <property type="project" value="UniProtKB-UniRule"/>
</dbReference>
<dbReference type="GO" id="GO:0045727">
    <property type="term" value="P:positive regulation of translation"/>
    <property type="evidence" value="ECO:0007669"/>
    <property type="project" value="UniProtKB-UniRule"/>
</dbReference>
<dbReference type="CDD" id="cd03699">
    <property type="entry name" value="EF4_II"/>
    <property type="match status" value="1"/>
</dbReference>
<dbReference type="CDD" id="cd16260">
    <property type="entry name" value="EF4_III"/>
    <property type="match status" value="1"/>
</dbReference>
<dbReference type="CDD" id="cd01890">
    <property type="entry name" value="LepA"/>
    <property type="match status" value="1"/>
</dbReference>
<dbReference type="CDD" id="cd03709">
    <property type="entry name" value="lepA_C"/>
    <property type="match status" value="1"/>
</dbReference>
<dbReference type="FunFam" id="3.30.70.240:FF:000005">
    <property type="entry name" value="Elongation factor 4"/>
    <property type="match status" value="1"/>
</dbReference>
<dbReference type="FunFam" id="3.40.50.300:FF:000078">
    <property type="entry name" value="Elongation factor 4"/>
    <property type="match status" value="1"/>
</dbReference>
<dbReference type="FunFam" id="2.40.30.10:FF:000015">
    <property type="entry name" value="Translation factor GUF1, mitochondrial"/>
    <property type="match status" value="1"/>
</dbReference>
<dbReference type="FunFam" id="3.30.70.2570:FF:000001">
    <property type="entry name" value="Translation factor GUF1, mitochondrial"/>
    <property type="match status" value="1"/>
</dbReference>
<dbReference type="FunFam" id="3.30.70.870:FF:000004">
    <property type="entry name" value="Translation factor GUF1, mitochondrial"/>
    <property type="match status" value="1"/>
</dbReference>
<dbReference type="Gene3D" id="3.30.70.240">
    <property type="match status" value="1"/>
</dbReference>
<dbReference type="Gene3D" id="3.30.70.2570">
    <property type="entry name" value="Elongation factor 4, C-terminal domain"/>
    <property type="match status" value="1"/>
</dbReference>
<dbReference type="Gene3D" id="3.30.70.870">
    <property type="entry name" value="Elongation Factor G (Translational Gtpase), domain 3"/>
    <property type="match status" value="1"/>
</dbReference>
<dbReference type="Gene3D" id="3.40.50.300">
    <property type="entry name" value="P-loop containing nucleotide triphosphate hydrolases"/>
    <property type="match status" value="1"/>
</dbReference>
<dbReference type="Gene3D" id="2.40.30.10">
    <property type="entry name" value="Translation factors"/>
    <property type="match status" value="1"/>
</dbReference>
<dbReference type="HAMAP" id="MF_00071">
    <property type="entry name" value="LepA"/>
    <property type="match status" value="1"/>
</dbReference>
<dbReference type="InterPro" id="IPR006297">
    <property type="entry name" value="EF-4"/>
</dbReference>
<dbReference type="InterPro" id="IPR035647">
    <property type="entry name" value="EFG_III/V"/>
</dbReference>
<dbReference type="InterPro" id="IPR000640">
    <property type="entry name" value="EFG_V-like"/>
</dbReference>
<dbReference type="InterPro" id="IPR004161">
    <property type="entry name" value="EFTu-like_2"/>
</dbReference>
<dbReference type="InterPro" id="IPR031157">
    <property type="entry name" value="G_TR_CS"/>
</dbReference>
<dbReference type="InterPro" id="IPR038363">
    <property type="entry name" value="LepA_C_sf"/>
</dbReference>
<dbReference type="InterPro" id="IPR013842">
    <property type="entry name" value="LepA_CTD"/>
</dbReference>
<dbReference type="InterPro" id="IPR035654">
    <property type="entry name" value="LepA_IV"/>
</dbReference>
<dbReference type="InterPro" id="IPR027417">
    <property type="entry name" value="P-loop_NTPase"/>
</dbReference>
<dbReference type="InterPro" id="IPR005225">
    <property type="entry name" value="Small_GTP-bd"/>
</dbReference>
<dbReference type="InterPro" id="IPR000795">
    <property type="entry name" value="T_Tr_GTP-bd_dom"/>
</dbReference>
<dbReference type="NCBIfam" id="TIGR01393">
    <property type="entry name" value="lepA"/>
    <property type="match status" value="1"/>
</dbReference>
<dbReference type="NCBIfam" id="TIGR00231">
    <property type="entry name" value="small_GTP"/>
    <property type="match status" value="1"/>
</dbReference>
<dbReference type="PANTHER" id="PTHR43512:SF4">
    <property type="entry name" value="TRANSLATION FACTOR GUF1 HOMOLOG, CHLOROPLASTIC"/>
    <property type="match status" value="1"/>
</dbReference>
<dbReference type="PANTHER" id="PTHR43512">
    <property type="entry name" value="TRANSLATION FACTOR GUF1-RELATED"/>
    <property type="match status" value="1"/>
</dbReference>
<dbReference type="Pfam" id="PF00679">
    <property type="entry name" value="EFG_C"/>
    <property type="match status" value="1"/>
</dbReference>
<dbReference type="Pfam" id="PF00009">
    <property type="entry name" value="GTP_EFTU"/>
    <property type="match status" value="1"/>
</dbReference>
<dbReference type="Pfam" id="PF03144">
    <property type="entry name" value="GTP_EFTU_D2"/>
    <property type="match status" value="1"/>
</dbReference>
<dbReference type="Pfam" id="PF06421">
    <property type="entry name" value="LepA_C"/>
    <property type="match status" value="1"/>
</dbReference>
<dbReference type="PRINTS" id="PR00315">
    <property type="entry name" value="ELONGATNFCT"/>
</dbReference>
<dbReference type="SUPFAM" id="SSF54980">
    <property type="entry name" value="EF-G C-terminal domain-like"/>
    <property type="match status" value="2"/>
</dbReference>
<dbReference type="SUPFAM" id="SSF52540">
    <property type="entry name" value="P-loop containing nucleoside triphosphate hydrolases"/>
    <property type="match status" value="1"/>
</dbReference>
<dbReference type="PROSITE" id="PS00301">
    <property type="entry name" value="G_TR_1"/>
    <property type="match status" value="1"/>
</dbReference>
<dbReference type="PROSITE" id="PS51722">
    <property type="entry name" value="G_TR_2"/>
    <property type="match status" value="1"/>
</dbReference>
<sequence>MKNIRNFSIIAHIDHGKSTLSDRLIQTCGGLSDREMEAQVLDSMDLERERGITIKAQSVTLNYKAKDGETYQLNFIDTPGHVDFSYEVSRSLAACEGALLVVDAGQGVEAQTLANCYTAIEMDLEVVPILNKIDLPAADPERVAEEIEDIVGIDAMEAVRCSAKTGVGIEDVLEEIVAKIPAPEGDPNAPLQALIIDSWFDNYLGVVSLVRIKNGVLRKGDKIKVMSTGQTYNVDRLGIFTPKQEDTTVLECGEVGWVVCAIKDILGAPVGDTLTHQHNSATEVLPGFKKVKPQVYAGLFPVSSDDYEAFRDALGKLSLNDASLFYEPETSTALGFGFRCGFLGLLHMEIIQERLEREYDLDLITTAPTVIYEVQLTNGEVVYVDSPAKLPPLNNIAEIREPIAECNMLVPQEYLGNVITLCVEKRGVQTNMVYHGNQIALTYEIPMGEVVLDFFDRLKSTSRGYASLDYGFKRFQAADMVRVDIMINSERVDALALIVHKDNSQYRGRELVEKMRELIPRQQFDIAIQAAIGNHIIARSTVKQLRKNVLAKCYGGDVSRKKKLLQKQKEGKKRMKSLGNVEVPQEAFLAILHVGKDK</sequence>
<feature type="chain" id="PRO_1000032003" description="Elongation factor 4">
    <location>
        <begin position="1"/>
        <end position="598"/>
    </location>
</feature>
<feature type="domain" description="tr-type G">
    <location>
        <begin position="2"/>
        <end position="184"/>
    </location>
</feature>
<feature type="binding site" evidence="1">
    <location>
        <begin position="14"/>
        <end position="19"/>
    </location>
    <ligand>
        <name>GTP</name>
        <dbReference type="ChEBI" id="CHEBI:37565"/>
    </ligand>
</feature>
<feature type="binding site" evidence="1">
    <location>
        <begin position="131"/>
        <end position="134"/>
    </location>
    <ligand>
        <name>GTP</name>
        <dbReference type="ChEBI" id="CHEBI:37565"/>
    </ligand>
</feature>
<comment type="function">
    <text evidence="1">Required for accurate and efficient protein synthesis under certain stress conditions. May act as a fidelity factor of the translation reaction, by catalyzing a one-codon backward translocation of tRNAs on improperly translocated ribosomes. Back-translocation proceeds from a post-translocation (POST) complex to a pre-translocation (PRE) complex, thus giving elongation factor G a second chance to translocate the tRNAs correctly. Binds to ribosomes in a GTP-dependent manner.</text>
</comment>
<comment type="catalytic activity">
    <reaction evidence="1">
        <text>GTP + H2O = GDP + phosphate + H(+)</text>
        <dbReference type="Rhea" id="RHEA:19669"/>
        <dbReference type="ChEBI" id="CHEBI:15377"/>
        <dbReference type="ChEBI" id="CHEBI:15378"/>
        <dbReference type="ChEBI" id="CHEBI:37565"/>
        <dbReference type="ChEBI" id="CHEBI:43474"/>
        <dbReference type="ChEBI" id="CHEBI:58189"/>
        <dbReference type="EC" id="3.6.5.n1"/>
    </reaction>
</comment>
<comment type="subcellular location">
    <subcellularLocation>
        <location evidence="1">Cell inner membrane</location>
        <topology evidence="1">Peripheral membrane protein</topology>
        <orientation evidence="1">Cytoplasmic side</orientation>
    </subcellularLocation>
</comment>
<comment type="similarity">
    <text evidence="1">Belongs to the TRAFAC class translation factor GTPase superfamily. Classic translation factor GTPase family. LepA subfamily.</text>
</comment>
<evidence type="ECO:0000255" key="1">
    <source>
        <dbReference type="HAMAP-Rule" id="MF_00071"/>
    </source>
</evidence>
<accession>A5UFI9</accession>
<gene>
    <name evidence="1" type="primary">lepA</name>
    <name type="ordered locus">CGSHiGG_02545</name>
</gene>